<feature type="chain" id="PRO_0000183467" description="Cytochrome c oxidase subunit 1 homolog">
    <location>
        <begin position="1"/>
        <end position="539"/>
    </location>
</feature>
<feature type="transmembrane region" description="Helical" evidence="2">
    <location>
        <begin position="28"/>
        <end position="48"/>
    </location>
</feature>
<feature type="transmembrane region" description="Helical" evidence="2">
    <location>
        <begin position="75"/>
        <end position="95"/>
    </location>
</feature>
<feature type="transmembrane region" description="Helical" evidence="2">
    <location>
        <begin position="118"/>
        <end position="138"/>
    </location>
</feature>
<feature type="transmembrane region" description="Helical" evidence="2">
    <location>
        <begin position="154"/>
        <end position="174"/>
    </location>
</feature>
<feature type="transmembrane region" description="Helical" evidence="2">
    <location>
        <begin position="187"/>
        <end position="207"/>
    </location>
</feature>
<feature type="transmembrane region" description="Helical" evidence="2">
    <location>
        <begin position="214"/>
        <end position="234"/>
    </location>
</feature>
<feature type="transmembrane region" description="Helical" evidence="2">
    <location>
        <begin position="265"/>
        <end position="285"/>
    </location>
</feature>
<feature type="transmembrane region" description="Helical" evidence="2">
    <location>
        <begin position="298"/>
        <end position="318"/>
    </location>
</feature>
<feature type="transmembrane region" description="Helical" evidence="2">
    <location>
        <begin position="330"/>
        <end position="350"/>
    </location>
</feature>
<feature type="transmembrane region" description="Helical" evidence="2">
    <location>
        <begin position="368"/>
        <end position="388"/>
    </location>
</feature>
<feature type="transmembrane region" description="Helical" evidence="2">
    <location>
        <begin position="402"/>
        <end position="422"/>
    </location>
</feature>
<feature type="transmembrane region" description="Helical" evidence="2">
    <location>
        <begin position="443"/>
        <end position="463"/>
    </location>
</feature>
<feature type="transmembrane region" description="Helical" evidence="2">
    <location>
        <begin position="498"/>
        <end position="518"/>
    </location>
</feature>
<feature type="binding site" description="axial binding residue" evidence="1">
    <location>
        <position position="117"/>
    </location>
    <ligand>
        <name>heme b</name>
        <dbReference type="ChEBI" id="CHEBI:60344"/>
        <label>1; low-spin</label>
    </ligand>
    <ligandPart>
        <name>Fe</name>
        <dbReference type="ChEBI" id="CHEBI:18248"/>
    </ligandPart>
</feature>
<feature type="binding site" evidence="1">
    <location>
        <position position="266"/>
    </location>
    <ligand>
        <name>Cu cation</name>
        <dbReference type="ChEBI" id="CHEBI:23378"/>
        <label>B</label>
    </ligand>
</feature>
<feature type="binding site" evidence="1">
    <location>
        <position position="316"/>
    </location>
    <ligand>
        <name>Cu cation</name>
        <dbReference type="ChEBI" id="CHEBI:23378"/>
        <label>B</label>
    </ligand>
</feature>
<feature type="binding site" evidence="1">
    <location>
        <position position="317"/>
    </location>
    <ligand>
        <name>Cu cation</name>
        <dbReference type="ChEBI" id="CHEBI:23378"/>
        <label>B</label>
    </ligand>
</feature>
<feature type="binding site" description="axial binding residue" evidence="1">
    <location>
        <position position="404"/>
    </location>
    <ligand>
        <name>heme b</name>
        <dbReference type="ChEBI" id="CHEBI:60344"/>
        <label>2; high-spin</label>
    </ligand>
    <ligandPart>
        <name>Fe</name>
        <dbReference type="ChEBI" id="CHEBI:18248"/>
    </ligandPart>
</feature>
<feature type="binding site" description="axial binding residue" evidence="1">
    <location>
        <position position="406"/>
    </location>
    <ligand>
        <name>heme b</name>
        <dbReference type="ChEBI" id="CHEBI:60344"/>
        <label>1; low-spin</label>
    </ligand>
    <ligandPart>
        <name>Fe</name>
        <dbReference type="ChEBI" id="CHEBI:18248"/>
    </ligandPart>
</feature>
<gene>
    <name type="primary">fixN</name>
</gene>
<organism>
    <name type="scientific">Agrobacterium tumefaciens (strain T37)</name>
    <dbReference type="NCBI Taxonomy" id="176300"/>
    <lineage>
        <taxon>Bacteria</taxon>
        <taxon>Pseudomonadati</taxon>
        <taxon>Pseudomonadota</taxon>
        <taxon>Alphaproteobacteria</taxon>
        <taxon>Hyphomicrobiales</taxon>
        <taxon>Rhizobiaceae</taxon>
        <taxon>Rhizobium/Agrobacterium group</taxon>
        <taxon>Agrobacterium</taxon>
        <taxon>Agrobacterium tumefaciens complex</taxon>
    </lineage>
</organism>
<name>FIXN_AGRT7</name>
<keyword id="KW-1003">Cell membrane</keyword>
<keyword id="KW-0186">Copper</keyword>
<keyword id="KW-0249">Electron transport</keyword>
<keyword id="KW-0349">Heme</keyword>
<keyword id="KW-0408">Iron</keyword>
<keyword id="KW-0472">Membrane</keyword>
<keyword id="KW-0479">Metal-binding</keyword>
<keyword id="KW-0679">Respiratory chain</keyword>
<keyword id="KW-1278">Translocase</keyword>
<keyword id="KW-0812">Transmembrane</keyword>
<keyword id="KW-1133">Transmembrane helix</keyword>
<keyword id="KW-0813">Transport</keyword>
<accession>P98055</accession>
<evidence type="ECO:0000250" key="1">
    <source>
        <dbReference type="UniProtKB" id="D9IA43"/>
    </source>
</evidence>
<evidence type="ECO:0000255" key="2"/>
<evidence type="ECO:0000305" key="3"/>
<proteinExistence type="inferred from homology"/>
<dbReference type="EC" id="7.1.1.9"/>
<dbReference type="EMBL" id="Z46239">
    <property type="protein sequence ID" value="CAA86308.1"/>
    <property type="molecule type" value="Genomic_DNA"/>
</dbReference>
<dbReference type="PIR" id="S54758">
    <property type="entry name" value="S49495"/>
</dbReference>
<dbReference type="SMR" id="P98055"/>
<dbReference type="UniPathway" id="UPA00705"/>
<dbReference type="GO" id="GO:0005886">
    <property type="term" value="C:plasma membrane"/>
    <property type="evidence" value="ECO:0007669"/>
    <property type="project" value="UniProtKB-SubCell"/>
</dbReference>
<dbReference type="GO" id="GO:0004129">
    <property type="term" value="F:cytochrome-c oxidase activity"/>
    <property type="evidence" value="ECO:0007669"/>
    <property type="project" value="UniProtKB-EC"/>
</dbReference>
<dbReference type="GO" id="GO:0020037">
    <property type="term" value="F:heme binding"/>
    <property type="evidence" value="ECO:0007669"/>
    <property type="project" value="InterPro"/>
</dbReference>
<dbReference type="GO" id="GO:0046872">
    <property type="term" value="F:metal ion binding"/>
    <property type="evidence" value="ECO:0007669"/>
    <property type="project" value="UniProtKB-KW"/>
</dbReference>
<dbReference type="GO" id="GO:0015990">
    <property type="term" value="P:electron transport coupled proton transport"/>
    <property type="evidence" value="ECO:0007669"/>
    <property type="project" value="TreeGrafter"/>
</dbReference>
<dbReference type="GO" id="GO:0006119">
    <property type="term" value="P:oxidative phosphorylation"/>
    <property type="evidence" value="ECO:0007669"/>
    <property type="project" value="UniProtKB-UniPathway"/>
</dbReference>
<dbReference type="GO" id="GO:0022904">
    <property type="term" value="P:respiratory electron transport chain"/>
    <property type="evidence" value="ECO:0007669"/>
    <property type="project" value="TreeGrafter"/>
</dbReference>
<dbReference type="CDD" id="cd01661">
    <property type="entry name" value="cbb3_Oxidase_I"/>
    <property type="match status" value="1"/>
</dbReference>
<dbReference type="FunFam" id="1.20.210.10:FF:000005">
    <property type="entry name" value="Cytochrome c oxidase, cbb3-type, subunit I"/>
    <property type="match status" value="1"/>
</dbReference>
<dbReference type="Gene3D" id="1.20.210.10">
    <property type="entry name" value="Cytochrome c oxidase-like, subunit I domain"/>
    <property type="match status" value="1"/>
</dbReference>
<dbReference type="InterPro" id="IPR023616">
    <property type="entry name" value="Cyt_c_oxase-like_su1_dom"/>
</dbReference>
<dbReference type="InterPro" id="IPR036927">
    <property type="entry name" value="Cyt_c_oxase-like_su1_sf"/>
</dbReference>
<dbReference type="InterPro" id="IPR000883">
    <property type="entry name" value="Cyt_C_Oxase_1"/>
</dbReference>
<dbReference type="InterPro" id="IPR023615">
    <property type="entry name" value="Cyt_c_Oxase_su1_BS"/>
</dbReference>
<dbReference type="InterPro" id="IPR004677">
    <property type="entry name" value="Cyt_c_oxidase_cbb3_su1"/>
</dbReference>
<dbReference type="NCBIfam" id="TIGR00780">
    <property type="entry name" value="ccoN"/>
    <property type="match status" value="1"/>
</dbReference>
<dbReference type="PANTHER" id="PTHR10422">
    <property type="entry name" value="CYTOCHROME C OXIDASE SUBUNIT 1"/>
    <property type="match status" value="1"/>
</dbReference>
<dbReference type="PANTHER" id="PTHR10422:SF29">
    <property type="entry name" value="CYTOCHROME C OXIDASE SUBUNIT 1 HOMOLOG, BACTEROID"/>
    <property type="match status" value="1"/>
</dbReference>
<dbReference type="Pfam" id="PF00115">
    <property type="entry name" value="COX1"/>
    <property type="match status" value="1"/>
</dbReference>
<dbReference type="SUPFAM" id="SSF81442">
    <property type="entry name" value="Cytochrome c oxidase subunit I-like"/>
    <property type="match status" value="1"/>
</dbReference>
<dbReference type="PROSITE" id="PS50855">
    <property type="entry name" value="COX1"/>
    <property type="match status" value="1"/>
</dbReference>
<dbReference type="PROSITE" id="PS00077">
    <property type="entry name" value="COX1_CUB"/>
    <property type="match status" value="1"/>
</dbReference>
<protein>
    <recommendedName>
        <fullName>Cytochrome c oxidase subunit 1 homolog</fullName>
        <ecNumber>7.1.1.9</ecNumber>
    </recommendedName>
    <alternativeName>
        <fullName>Cytochrome c oxidase polypeptide I homolog</fullName>
    </alternativeName>
</protein>
<reference key="1">
    <citation type="journal article" date="1995" name="Mol. Gen. Genet.">
        <title>A homolog of the Rhizobium meliloti nitrogen fixation gene fixN is involved in the production of a microaerobically induced oxidase activity in the phytopathogenic bacterium Agrobacterium tumefaciens.</title>
        <authorList>
            <person name="Schlueter A."/>
            <person name="Rueberg S."/>
            <person name="Kraemer M."/>
            <person name="Weidner S."/>
            <person name="Priefer U."/>
        </authorList>
    </citation>
    <scope>NUCLEOTIDE SEQUENCE [GENOMIC DNA]</scope>
</reference>
<comment type="function">
    <text>Cytochrome c oxidase is the component of the respiratory chain that catalyzes the reduction of oxygen to water. Subunits 1-3 form the functional core of the enzyme complex. Co I is the catalytic subunit of the enzyme. Electrons originating in cytochrome c or a quinol are transferred to the bimetallic center formed by a high-spin heme and copper B.</text>
</comment>
<comment type="catalytic activity">
    <reaction>
        <text>4 Fe(II)-[cytochrome c] + O2 + 8 H(+)(in) = 4 Fe(III)-[cytochrome c] + 2 H2O + 4 H(+)(out)</text>
        <dbReference type="Rhea" id="RHEA:11436"/>
        <dbReference type="Rhea" id="RHEA-COMP:10350"/>
        <dbReference type="Rhea" id="RHEA-COMP:14399"/>
        <dbReference type="ChEBI" id="CHEBI:15377"/>
        <dbReference type="ChEBI" id="CHEBI:15378"/>
        <dbReference type="ChEBI" id="CHEBI:15379"/>
        <dbReference type="ChEBI" id="CHEBI:29033"/>
        <dbReference type="ChEBI" id="CHEBI:29034"/>
        <dbReference type="EC" id="7.1.1.9"/>
    </reaction>
</comment>
<comment type="cofactor">
    <cofactor evidence="1">
        <name>Cu(2+)</name>
        <dbReference type="ChEBI" id="CHEBI:29036"/>
    </cofactor>
    <text evidence="1">Binds 1 copper ion per subunit, denoted as copper B.</text>
</comment>
<comment type="cofactor">
    <cofactor evidence="1">
        <name>heme b</name>
        <dbReference type="ChEBI" id="CHEBI:60344"/>
    </cofactor>
    <text evidence="1">Binds 2 heme b groups per subunit, denoted as high- and low-spin.</text>
</comment>
<comment type="pathway">
    <text>Energy metabolism; oxidative phosphorylation.</text>
</comment>
<comment type="subcellular location">
    <subcellularLocation>
        <location>Cell membrane</location>
        <topology>Multi-pass membrane protein</topology>
    </subcellularLocation>
</comment>
<comment type="similarity">
    <text evidence="3">Belongs to the heme-copper respiratory oxidase family.</text>
</comment>
<sequence>MNYTLETADRALGAFPALLGAAFAHDSLFAAHMWVLFFTLVVSTLLLLRRVSFLPPVAGPPCRRTEYFDEVVKYGVMATVFWGVVGFLVGVVVALQLAFPDLNIAPYFNFGRMRPLHTSAVIFAFGGNALIATSFYVVQRTCRARLFGGNLGWFVFWGYNLFIIMAATGYLLGITQGREYAEPEWYVDLWLTIVWVAYLATFLGTILTRKEPHISVANWFYLSFIVTIAMLHIVNNLAVPVSFLGVKSYSAFSGVQAALTQWWYGHNAVGFFLTAGFLGMMYYFIPKQVNRPVYSYRLSIIHFWALIFMYIWAGPHHLHYTALPDWAQTLGMVFSIMLWMPSWGGMINGLMTLSGAWDKIRTDPIVRMMVMAVAFYGMATFEGPMMSIKAVNSLSHYTDWTIGHVHSGALGWNGMITFGAIYYLTPKLWGRDRLYSLQLVNWHFWLATLGIVVYAAVMWVAGIQQALMWREYDSQGFLVYSFAESVAALFPYYVMRALGGLMFLSGALIMAYNVTMTILGHQREEGASKGAAPSLQPAE</sequence>